<evidence type="ECO:0000250" key="1"/>
<evidence type="ECO:0000250" key="2">
    <source>
        <dbReference type="UniProtKB" id="Q9D6I7"/>
    </source>
</evidence>
<evidence type="ECO:0000255" key="3"/>
<evidence type="ECO:0000305" key="4"/>
<comment type="subcellular location">
    <subcellularLocation>
        <location evidence="2">Endoplasmic reticulum membrane</location>
        <topology evidence="2">Single-pass type II membrane protein</topology>
    </subcellularLocation>
</comment>
<comment type="PTM">
    <text evidence="1">Among the many cysteines in the lumenal domain, most are probably involved in disulfide bonds.</text>
</comment>
<comment type="similarity">
    <text evidence="4">Belongs to the DIPK family.</text>
</comment>
<reference key="1">
    <citation type="submission" date="2004-11" db="EMBL/GenBank/DDBJ databases">
        <authorList>
            <consortium name="The German cDNA consortium"/>
        </authorList>
    </citation>
    <scope>NUCLEOTIDE SEQUENCE [LARGE SCALE MRNA]</scope>
    <source>
        <tissue>Brain cortex</tissue>
    </source>
</reference>
<feature type="chain" id="PRO_0000282425" description="Divergent protein kinase domain 1A">
    <location>
        <begin position="1"/>
        <end position="428"/>
    </location>
</feature>
<feature type="topological domain" description="Cytoplasmic" evidence="3">
    <location>
        <begin position="1"/>
        <end position="27"/>
    </location>
</feature>
<feature type="transmembrane region" description="Helical" evidence="3">
    <location>
        <begin position="28"/>
        <end position="48"/>
    </location>
</feature>
<feature type="topological domain" description="Lumenal" evidence="3">
    <location>
        <begin position="49"/>
        <end position="428"/>
    </location>
</feature>
<organism>
    <name type="scientific">Pongo abelii</name>
    <name type="common">Sumatran orangutan</name>
    <name type="synonym">Pongo pygmaeus abelii</name>
    <dbReference type="NCBI Taxonomy" id="9601"/>
    <lineage>
        <taxon>Eukaryota</taxon>
        <taxon>Metazoa</taxon>
        <taxon>Chordata</taxon>
        <taxon>Craniata</taxon>
        <taxon>Vertebrata</taxon>
        <taxon>Euteleostomi</taxon>
        <taxon>Mammalia</taxon>
        <taxon>Eutheria</taxon>
        <taxon>Euarchontoglires</taxon>
        <taxon>Primates</taxon>
        <taxon>Haplorrhini</taxon>
        <taxon>Catarrhini</taxon>
        <taxon>Hominidae</taxon>
        <taxon>Pongo</taxon>
    </lineage>
</organism>
<name>DIK1A_PONAB</name>
<proteinExistence type="evidence at transcript level"/>
<keyword id="KW-1015">Disulfide bond</keyword>
<keyword id="KW-0256">Endoplasmic reticulum</keyword>
<keyword id="KW-0472">Membrane</keyword>
<keyword id="KW-1185">Reference proteome</keyword>
<keyword id="KW-0735">Signal-anchor</keyword>
<keyword id="KW-0812">Transmembrane</keyword>
<keyword id="KW-1133">Transmembrane helix</keyword>
<gene>
    <name type="primary">DIPK1A</name>
    <name type="synonym">FAM69A</name>
</gene>
<dbReference type="EMBL" id="CR860662">
    <property type="protein sequence ID" value="CAH92782.1"/>
    <property type="molecule type" value="mRNA"/>
</dbReference>
<dbReference type="RefSeq" id="NP_001126623.1">
    <property type="nucleotide sequence ID" value="NM_001133151.1"/>
</dbReference>
<dbReference type="FunCoup" id="Q5R634">
    <property type="interactions" value="665"/>
</dbReference>
<dbReference type="Ensembl" id="ENSPPYT00000001379.3">
    <property type="protein sequence ID" value="ENSPPYP00000001334.3"/>
    <property type="gene ID" value="ENSPPYG00000001151.3"/>
</dbReference>
<dbReference type="GeneID" id="100173620"/>
<dbReference type="KEGG" id="pon:100173620"/>
<dbReference type="CTD" id="388650"/>
<dbReference type="eggNOG" id="ENOG502QU5P">
    <property type="taxonomic scope" value="Eukaryota"/>
</dbReference>
<dbReference type="GeneTree" id="ENSGT00390000006452"/>
<dbReference type="InParanoid" id="Q5R634"/>
<dbReference type="OMA" id="YMRIKYL"/>
<dbReference type="OrthoDB" id="8860232at2759"/>
<dbReference type="Proteomes" id="UP000001595">
    <property type="component" value="Chromosome 1"/>
</dbReference>
<dbReference type="GO" id="GO:0005789">
    <property type="term" value="C:endoplasmic reticulum membrane"/>
    <property type="evidence" value="ECO:0007669"/>
    <property type="project" value="UniProtKB-SubCell"/>
</dbReference>
<dbReference type="InterPro" id="IPR022049">
    <property type="entry name" value="FAM69_kinase_dom"/>
</dbReference>
<dbReference type="InterPro" id="IPR029244">
    <property type="entry name" value="FAM69_N"/>
</dbReference>
<dbReference type="PANTHER" id="PTHR21093:SF4">
    <property type="entry name" value="DIVERGENT PROTEIN KINASE DOMAIN 1A"/>
    <property type="match status" value="1"/>
</dbReference>
<dbReference type="PANTHER" id="PTHR21093">
    <property type="entry name" value="DIVERGENT PROTEIN KINASE DOMAIN 1C-RELATED"/>
    <property type="match status" value="1"/>
</dbReference>
<dbReference type="Pfam" id="PF12260">
    <property type="entry name" value="PIP49_C"/>
    <property type="match status" value="1"/>
</dbReference>
<dbReference type="Pfam" id="PF14875">
    <property type="entry name" value="PIP49_N"/>
    <property type="match status" value="1"/>
</dbReference>
<dbReference type="SMART" id="SM01299">
    <property type="entry name" value="PIP49_N"/>
    <property type="match status" value="1"/>
</dbReference>
<accession>Q5R634</accession>
<protein>
    <recommendedName>
        <fullName evidence="4">Divergent protein kinase domain 1A</fullName>
    </recommendedName>
    <alternativeName>
        <fullName>Protein FAM69A</fullName>
    </alternativeName>
</protein>
<sequence length="428" mass="49024">MARSLCPGAWLRKPYYLQARFSYVRMKYLFFSWLVVFVGSWIIYVQYSTYTELCRGKDCKKIICDKYKTGVIDGPACNSLCVTETLYFGKCLSTKPNNQMYLGIWDNLPGVVKCQMEQALHLDFGTELEPRKEIVLFDKPTRGTTVQKFKEMVYSLFKAKLGDQGNLSELVNLILTVADGDKDGQVSLGEAKSAWALLQLNEFLLMVILQDKEHTPKLMGFCGDLYVMESVEYTSLYGISLPWVIELFIPSGFRRSMDQLFTPSWPRKAKIAIGLLEFVEDVFHGPYGNFLMCDTSAKNLGYNDKYDLKMVDMRKIVPETNLKELIKDRHCESDLDCVYGTDCRTSCDQSTMKCTSEVIQPNLAKACQLLKDYLLRGAPSEIREELEKQLYSCIALKVTANQMEMEHSLILNNLKTLLWKKISYTNDS</sequence>